<sequence>MKKVVAIDGPSGAGKSTVSKEIAKALGFQYLDTGALYRAVAYYFSIKFNYIDDFSLLTEQEIEEELKNIKIHYKNGRVFLSGEDVSDFIRDPKIGEITSQLSTQKVVRDFLMPLQRSFAEKVDIVAEGRDMTTVVFPDAWKKFYLDASPQVRAKRRFEQLIQSGKKISFEEALRDVIERDKRDCSRENAPLRLSKDAFYIDTSELTLQEVISIVLKKVAEDA</sequence>
<comment type="catalytic activity">
    <reaction evidence="1">
        <text>CMP + ATP = CDP + ADP</text>
        <dbReference type="Rhea" id="RHEA:11600"/>
        <dbReference type="ChEBI" id="CHEBI:30616"/>
        <dbReference type="ChEBI" id="CHEBI:58069"/>
        <dbReference type="ChEBI" id="CHEBI:60377"/>
        <dbReference type="ChEBI" id="CHEBI:456216"/>
        <dbReference type="EC" id="2.7.4.25"/>
    </reaction>
</comment>
<comment type="catalytic activity">
    <reaction evidence="1">
        <text>dCMP + ATP = dCDP + ADP</text>
        <dbReference type="Rhea" id="RHEA:25094"/>
        <dbReference type="ChEBI" id="CHEBI:30616"/>
        <dbReference type="ChEBI" id="CHEBI:57566"/>
        <dbReference type="ChEBI" id="CHEBI:58593"/>
        <dbReference type="ChEBI" id="CHEBI:456216"/>
        <dbReference type="EC" id="2.7.4.25"/>
    </reaction>
</comment>
<comment type="subcellular location">
    <subcellularLocation>
        <location evidence="1">Cytoplasm</location>
    </subcellularLocation>
</comment>
<comment type="similarity">
    <text evidence="1">Belongs to the cytidylate kinase family. Type 1 subfamily.</text>
</comment>
<proteinExistence type="inferred from homology"/>
<dbReference type="EC" id="2.7.4.25" evidence="1"/>
<dbReference type="EMBL" id="CP001147">
    <property type="protein sequence ID" value="ACI21915.1"/>
    <property type="molecule type" value="Genomic_DNA"/>
</dbReference>
<dbReference type="RefSeq" id="WP_012546614.1">
    <property type="nucleotide sequence ID" value="NC_011296.1"/>
</dbReference>
<dbReference type="RefSeq" id="YP_002249559.1">
    <property type="nucleotide sequence ID" value="NC_011296.1"/>
</dbReference>
<dbReference type="SMR" id="B5YH69"/>
<dbReference type="FunCoup" id="B5YH69">
    <property type="interactions" value="306"/>
</dbReference>
<dbReference type="STRING" id="289376.THEYE_A1768"/>
<dbReference type="EnsemblBacteria" id="ACI21915">
    <property type="protein sequence ID" value="ACI21915"/>
    <property type="gene ID" value="THEYE_A1768"/>
</dbReference>
<dbReference type="KEGG" id="tye:THEYE_A1768"/>
<dbReference type="PATRIC" id="fig|289376.4.peg.1724"/>
<dbReference type="eggNOG" id="COG0283">
    <property type="taxonomic scope" value="Bacteria"/>
</dbReference>
<dbReference type="HOGENOM" id="CLU_079959_0_2_0"/>
<dbReference type="InParanoid" id="B5YH69"/>
<dbReference type="OrthoDB" id="9807434at2"/>
<dbReference type="Proteomes" id="UP000000718">
    <property type="component" value="Chromosome"/>
</dbReference>
<dbReference type="GO" id="GO:0005829">
    <property type="term" value="C:cytosol"/>
    <property type="evidence" value="ECO:0000318"/>
    <property type="project" value="GO_Central"/>
</dbReference>
<dbReference type="GO" id="GO:0004127">
    <property type="term" value="F:(d)CMP kinase activity"/>
    <property type="evidence" value="ECO:0000318"/>
    <property type="project" value="GO_Central"/>
</dbReference>
<dbReference type="GO" id="GO:0005524">
    <property type="term" value="F:ATP binding"/>
    <property type="evidence" value="ECO:0007669"/>
    <property type="project" value="UniProtKB-UniRule"/>
</dbReference>
<dbReference type="GO" id="GO:0036430">
    <property type="term" value="F:CMP kinase activity"/>
    <property type="evidence" value="ECO:0007669"/>
    <property type="project" value="RHEA"/>
</dbReference>
<dbReference type="GO" id="GO:0036431">
    <property type="term" value="F:dCMP kinase activity"/>
    <property type="evidence" value="ECO:0007669"/>
    <property type="project" value="RHEA"/>
</dbReference>
<dbReference type="GO" id="GO:0015949">
    <property type="term" value="P:nucleobase-containing small molecule interconversion"/>
    <property type="evidence" value="ECO:0000318"/>
    <property type="project" value="GO_Central"/>
</dbReference>
<dbReference type="GO" id="GO:0006220">
    <property type="term" value="P:pyrimidine nucleotide metabolic process"/>
    <property type="evidence" value="ECO:0007669"/>
    <property type="project" value="UniProtKB-UniRule"/>
</dbReference>
<dbReference type="CDD" id="cd02020">
    <property type="entry name" value="CMPK"/>
    <property type="match status" value="1"/>
</dbReference>
<dbReference type="FunFam" id="3.40.50.300:FF:001608">
    <property type="entry name" value="Cytidylate kinase"/>
    <property type="match status" value="1"/>
</dbReference>
<dbReference type="Gene3D" id="3.40.50.300">
    <property type="entry name" value="P-loop containing nucleotide triphosphate hydrolases"/>
    <property type="match status" value="1"/>
</dbReference>
<dbReference type="HAMAP" id="MF_00238">
    <property type="entry name" value="Cytidyl_kinase_type1"/>
    <property type="match status" value="1"/>
</dbReference>
<dbReference type="InterPro" id="IPR003136">
    <property type="entry name" value="Cytidylate_kin"/>
</dbReference>
<dbReference type="InterPro" id="IPR011994">
    <property type="entry name" value="Cytidylate_kinase_dom"/>
</dbReference>
<dbReference type="InterPro" id="IPR027417">
    <property type="entry name" value="P-loop_NTPase"/>
</dbReference>
<dbReference type="NCBIfam" id="TIGR00017">
    <property type="entry name" value="cmk"/>
    <property type="match status" value="1"/>
</dbReference>
<dbReference type="PANTHER" id="PTHR21299:SF2">
    <property type="entry name" value="CYTIDYLATE KINASE"/>
    <property type="match status" value="1"/>
</dbReference>
<dbReference type="PANTHER" id="PTHR21299">
    <property type="entry name" value="CYTIDYLATE KINASE/PANTOATE-BETA-ALANINE LIGASE"/>
    <property type="match status" value="1"/>
</dbReference>
<dbReference type="Pfam" id="PF02224">
    <property type="entry name" value="Cytidylate_kin"/>
    <property type="match status" value="1"/>
</dbReference>
<dbReference type="SUPFAM" id="SSF52540">
    <property type="entry name" value="P-loop containing nucleoside triphosphate hydrolases"/>
    <property type="match status" value="1"/>
</dbReference>
<reference key="1">
    <citation type="submission" date="2008-08" db="EMBL/GenBank/DDBJ databases">
        <title>The complete genome sequence of Thermodesulfovibrio yellowstonii strain ATCC 51303 / DSM 11347 / YP87.</title>
        <authorList>
            <person name="Dodson R.J."/>
            <person name="Durkin A.S."/>
            <person name="Wu M."/>
            <person name="Eisen J."/>
            <person name="Sutton G."/>
        </authorList>
    </citation>
    <scope>NUCLEOTIDE SEQUENCE [LARGE SCALE GENOMIC DNA]</scope>
    <source>
        <strain>ATCC 51303 / DSM 11347 / YP87</strain>
    </source>
</reference>
<protein>
    <recommendedName>
        <fullName evidence="1">Cytidylate kinase</fullName>
        <shortName evidence="1">CK</shortName>
        <ecNumber evidence="1">2.7.4.25</ecNumber>
    </recommendedName>
    <alternativeName>
        <fullName evidence="1">Cytidine monophosphate kinase</fullName>
        <shortName evidence="1">CMP kinase</shortName>
    </alternativeName>
</protein>
<evidence type="ECO:0000255" key="1">
    <source>
        <dbReference type="HAMAP-Rule" id="MF_00238"/>
    </source>
</evidence>
<name>KCY_THEYD</name>
<gene>
    <name evidence="1" type="primary">cmk</name>
    <name type="ordered locus">THEYE_A1768</name>
</gene>
<organism>
    <name type="scientific">Thermodesulfovibrio yellowstonii (strain ATCC 51303 / DSM 11347 / YP87)</name>
    <dbReference type="NCBI Taxonomy" id="289376"/>
    <lineage>
        <taxon>Bacteria</taxon>
        <taxon>Pseudomonadati</taxon>
        <taxon>Nitrospirota</taxon>
        <taxon>Thermodesulfovibrionia</taxon>
        <taxon>Thermodesulfovibrionales</taxon>
        <taxon>Thermodesulfovibrionaceae</taxon>
        <taxon>Thermodesulfovibrio</taxon>
    </lineage>
</organism>
<keyword id="KW-0067">ATP-binding</keyword>
<keyword id="KW-0963">Cytoplasm</keyword>
<keyword id="KW-0418">Kinase</keyword>
<keyword id="KW-0547">Nucleotide-binding</keyword>
<keyword id="KW-1185">Reference proteome</keyword>
<keyword id="KW-0808">Transferase</keyword>
<feature type="chain" id="PRO_1000125308" description="Cytidylate kinase">
    <location>
        <begin position="1"/>
        <end position="222"/>
    </location>
</feature>
<feature type="binding site" evidence="1">
    <location>
        <begin position="9"/>
        <end position="17"/>
    </location>
    <ligand>
        <name>ATP</name>
        <dbReference type="ChEBI" id="CHEBI:30616"/>
    </ligand>
</feature>
<accession>B5YH69</accession>